<organism>
    <name type="scientific">Bacillus cereus (strain ZK / E33L)</name>
    <dbReference type="NCBI Taxonomy" id="288681"/>
    <lineage>
        <taxon>Bacteria</taxon>
        <taxon>Bacillati</taxon>
        <taxon>Bacillota</taxon>
        <taxon>Bacilli</taxon>
        <taxon>Bacillales</taxon>
        <taxon>Bacillaceae</taxon>
        <taxon>Bacillus</taxon>
        <taxon>Bacillus cereus group</taxon>
    </lineage>
</organism>
<evidence type="ECO:0000255" key="1">
    <source>
        <dbReference type="HAMAP-Rule" id="MF_00185"/>
    </source>
</evidence>
<comment type="function">
    <text evidence="1">Catalyzes the transfer of a dimethylallyl group onto the adenine at position 37 in tRNAs that read codons beginning with uridine, leading to the formation of N6-(dimethylallyl)adenosine (i(6)A).</text>
</comment>
<comment type="catalytic activity">
    <reaction evidence="1">
        <text>adenosine(37) in tRNA + dimethylallyl diphosphate = N(6)-dimethylallyladenosine(37) in tRNA + diphosphate</text>
        <dbReference type="Rhea" id="RHEA:26482"/>
        <dbReference type="Rhea" id="RHEA-COMP:10162"/>
        <dbReference type="Rhea" id="RHEA-COMP:10375"/>
        <dbReference type="ChEBI" id="CHEBI:33019"/>
        <dbReference type="ChEBI" id="CHEBI:57623"/>
        <dbReference type="ChEBI" id="CHEBI:74411"/>
        <dbReference type="ChEBI" id="CHEBI:74415"/>
        <dbReference type="EC" id="2.5.1.75"/>
    </reaction>
</comment>
<comment type="cofactor">
    <cofactor evidence="1">
        <name>Mg(2+)</name>
        <dbReference type="ChEBI" id="CHEBI:18420"/>
    </cofactor>
</comment>
<comment type="subunit">
    <text evidence="1">Monomer.</text>
</comment>
<comment type="similarity">
    <text evidence="1">Belongs to the IPP transferase family.</text>
</comment>
<gene>
    <name evidence="1" type="primary">miaA</name>
    <name type="ordered locus">BCE33L3473</name>
</gene>
<feature type="chain" id="PRO_0000163871" description="tRNA dimethylallyltransferase">
    <location>
        <begin position="1"/>
        <end position="317"/>
    </location>
</feature>
<feature type="region of interest" description="Interaction with substrate tRNA" evidence="1">
    <location>
        <begin position="39"/>
        <end position="42"/>
    </location>
</feature>
<feature type="binding site" evidence="1">
    <location>
        <begin position="14"/>
        <end position="21"/>
    </location>
    <ligand>
        <name>ATP</name>
        <dbReference type="ChEBI" id="CHEBI:30616"/>
    </ligand>
</feature>
<feature type="binding site" evidence="1">
    <location>
        <begin position="16"/>
        <end position="21"/>
    </location>
    <ligand>
        <name>substrate</name>
    </ligand>
</feature>
<feature type="site" description="Interaction with substrate tRNA" evidence="1">
    <location>
        <position position="105"/>
    </location>
</feature>
<feature type="site" description="Interaction with substrate tRNA" evidence="1">
    <location>
        <position position="128"/>
    </location>
</feature>
<sequence length="317" mass="36652">MGEVQREKVAVIIGPTAVGKTKLSIDLAKALNGEIISGDSMQIYRTMDIGTAKVTKEEMDGIPHYMVDIKNPEESFSVAEFQERVRKHIREITERGKLPIIVGGTGLYIQSVLFDYQFTDDAGDAIYREQMEKLALERGVEYVHKKLQEVDPESAERIHANNVRRVIRALEIFHTSGEKMSDQLEKQENELLYDVSLIGLTMDREMLYDRINLRVDIMMDQGLLEEVEGLYNRGIRDCQSIQAIGYKEIYDYFEDRVSLEEAVSQLKTNSRRYAKRQLTWFRNKMDVTWFDVTDGEKTSEILRYIEGKLQLKSNNSK</sequence>
<keyword id="KW-0067">ATP-binding</keyword>
<keyword id="KW-0460">Magnesium</keyword>
<keyword id="KW-0547">Nucleotide-binding</keyword>
<keyword id="KW-0808">Transferase</keyword>
<keyword id="KW-0819">tRNA processing</keyword>
<name>MIAA_BACCZ</name>
<proteinExistence type="inferred from homology"/>
<protein>
    <recommendedName>
        <fullName evidence="1">tRNA dimethylallyltransferase</fullName>
        <ecNumber evidence="1">2.5.1.75</ecNumber>
    </recommendedName>
    <alternativeName>
        <fullName evidence="1">Dimethylallyl diphosphate:tRNA dimethylallyltransferase</fullName>
        <shortName evidence="1">DMAPP:tRNA dimethylallyltransferase</shortName>
        <shortName evidence="1">DMATase</shortName>
    </alternativeName>
    <alternativeName>
        <fullName evidence="1">Isopentenyl-diphosphate:tRNA isopentenyltransferase</fullName>
        <shortName evidence="1">IPP transferase</shortName>
        <shortName evidence="1">IPPT</shortName>
        <shortName evidence="1">IPTase</shortName>
    </alternativeName>
</protein>
<accession>Q636W2</accession>
<dbReference type="EC" id="2.5.1.75" evidence="1"/>
<dbReference type="EMBL" id="CP000001">
    <property type="protein sequence ID" value="AAU16792.1"/>
    <property type="molecule type" value="Genomic_DNA"/>
</dbReference>
<dbReference type="RefSeq" id="WP_000504940.1">
    <property type="nucleotide sequence ID" value="NC_006274.1"/>
</dbReference>
<dbReference type="SMR" id="Q636W2"/>
<dbReference type="GeneID" id="45023542"/>
<dbReference type="KEGG" id="bcz:BCE33L3473"/>
<dbReference type="Proteomes" id="UP000002612">
    <property type="component" value="Chromosome"/>
</dbReference>
<dbReference type="GO" id="GO:0005524">
    <property type="term" value="F:ATP binding"/>
    <property type="evidence" value="ECO:0007669"/>
    <property type="project" value="UniProtKB-UniRule"/>
</dbReference>
<dbReference type="GO" id="GO:0052381">
    <property type="term" value="F:tRNA dimethylallyltransferase activity"/>
    <property type="evidence" value="ECO:0007669"/>
    <property type="project" value="UniProtKB-UniRule"/>
</dbReference>
<dbReference type="GO" id="GO:0006400">
    <property type="term" value="P:tRNA modification"/>
    <property type="evidence" value="ECO:0007669"/>
    <property type="project" value="TreeGrafter"/>
</dbReference>
<dbReference type="FunFam" id="1.10.20.140:FF:000001">
    <property type="entry name" value="tRNA dimethylallyltransferase"/>
    <property type="match status" value="1"/>
</dbReference>
<dbReference type="Gene3D" id="1.10.20.140">
    <property type="match status" value="1"/>
</dbReference>
<dbReference type="Gene3D" id="3.40.50.300">
    <property type="entry name" value="P-loop containing nucleotide triphosphate hydrolases"/>
    <property type="match status" value="1"/>
</dbReference>
<dbReference type="HAMAP" id="MF_00185">
    <property type="entry name" value="IPP_trans"/>
    <property type="match status" value="1"/>
</dbReference>
<dbReference type="InterPro" id="IPR039657">
    <property type="entry name" value="Dimethylallyltransferase"/>
</dbReference>
<dbReference type="InterPro" id="IPR018022">
    <property type="entry name" value="IPT"/>
</dbReference>
<dbReference type="InterPro" id="IPR027417">
    <property type="entry name" value="P-loop_NTPase"/>
</dbReference>
<dbReference type="NCBIfam" id="TIGR00174">
    <property type="entry name" value="miaA"/>
    <property type="match status" value="1"/>
</dbReference>
<dbReference type="PANTHER" id="PTHR11088">
    <property type="entry name" value="TRNA DIMETHYLALLYLTRANSFERASE"/>
    <property type="match status" value="1"/>
</dbReference>
<dbReference type="PANTHER" id="PTHR11088:SF60">
    <property type="entry name" value="TRNA DIMETHYLALLYLTRANSFERASE"/>
    <property type="match status" value="1"/>
</dbReference>
<dbReference type="Pfam" id="PF01715">
    <property type="entry name" value="IPPT"/>
    <property type="match status" value="1"/>
</dbReference>
<dbReference type="SUPFAM" id="SSF52540">
    <property type="entry name" value="P-loop containing nucleoside triphosphate hydrolases"/>
    <property type="match status" value="2"/>
</dbReference>
<reference key="1">
    <citation type="journal article" date="2006" name="J. Bacteriol.">
        <title>Pathogenomic sequence analysis of Bacillus cereus and Bacillus thuringiensis isolates closely related to Bacillus anthracis.</title>
        <authorList>
            <person name="Han C.S."/>
            <person name="Xie G."/>
            <person name="Challacombe J.F."/>
            <person name="Altherr M.R."/>
            <person name="Bhotika S.S."/>
            <person name="Bruce D."/>
            <person name="Campbell C.S."/>
            <person name="Campbell M.L."/>
            <person name="Chen J."/>
            <person name="Chertkov O."/>
            <person name="Cleland C."/>
            <person name="Dimitrijevic M."/>
            <person name="Doggett N.A."/>
            <person name="Fawcett J.J."/>
            <person name="Glavina T."/>
            <person name="Goodwin L.A."/>
            <person name="Hill K.K."/>
            <person name="Hitchcock P."/>
            <person name="Jackson P.J."/>
            <person name="Keim P."/>
            <person name="Kewalramani A.R."/>
            <person name="Longmire J."/>
            <person name="Lucas S."/>
            <person name="Malfatti S."/>
            <person name="McMurry K."/>
            <person name="Meincke L.J."/>
            <person name="Misra M."/>
            <person name="Moseman B.L."/>
            <person name="Mundt M."/>
            <person name="Munk A.C."/>
            <person name="Okinaka R.T."/>
            <person name="Parson-Quintana B."/>
            <person name="Reilly L.P."/>
            <person name="Richardson P."/>
            <person name="Robinson D.L."/>
            <person name="Rubin E."/>
            <person name="Saunders E."/>
            <person name="Tapia R."/>
            <person name="Tesmer J.G."/>
            <person name="Thayer N."/>
            <person name="Thompson L.S."/>
            <person name="Tice H."/>
            <person name="Ticknor L.O."/>
            <person name="Wills P.L."/>
            <person name="Brettin T.S."/>
            <person name="Gilna P."/>
        </authorList>
    </citation>
    <scope>NUCLEOTIDE SEQUENCE [LARGE SCALE GENOMIC DNA]</scope>
    <source>
        <strain>ZK / E33L</strain>
    </source>
</reference>